<organism>
    <name type="scientific">Shewanella baltica (strain OS185)</name>
    <dbReference type="NCBI Taxonomy" id="402882"/>
    <lineage>
        <taxon>Bacteria</taxon>
        <taxon>Pseudomonadati</taxon>
        <taxon>Pseudomonadota</taxon>
        <taxon>Gammaproteobacteria</taxon>
        <taxon>Alteromonadales</taxon>
        <taxon>Shewanellaceae</taxon>
        <taxon>Shewanella</taxon>
    </lineage>
</organism>
<reference key="1">
    <citation type="submission" date="2007-07" db="EMBL/GenBank/DDBJ databases">
        <title>Complete sequence of chromosome of Shewanella baltica OS185.</title>
        <authorList>
            <consortium name="US DOE Joint Genome Institute"/>
            <person name="Copeland A."/>
            <person name="Lucas S."/>
            <person name="Lapidus A."/>
            <person name="Barry K."/>
            <person name="Glavina del Rio T."/>
            <person name="Dalin E."/>
            <person name="Tice H."/>
            <person name="Pitluck S."/>
            <person name="Sims D."/>
            <person name="Brettin T."/>
            <person name="Bruce D."/>
            <person name="Detter J.C."/>
            <person name="Han C."/>
            <person name="Schmutz J."/>
            <person name="Larimer F."/>
            <person name="Land M."/>
            <person name="Hauser L."/>
            <person name="Kyrpides N."/>
            <person name="Mikhailova N."/>
            <person name="Brettar I."/>
            <person name="Rodrigues J."/>
            <person name="Konstantinidis K."/>
            <person name="Tiedje J."/>
            <person name="Richardson P."/>
        </authorList>
    </citation>
    <scope>NUCLEOTIDE SEQUENCE [LARGE SCALE GENOMIC DNA]</scope>
    <source>
        <strain>OS185</strain>
    </source>
</reference>
<evidence type="ECO:0000255" key="1">
    <source>
        <dbReference type="HAMAP-Rule" id="MF_01072"/>
    </source>
</evidence>
<evidence type="ECO:0000256" key="2">
    <source>
        <dbReference type="SAM" id="MobiDB-lite"/>
    </source>
</evidence>
<protein>
    <recommendedName>
        <fullName evidence="1">Glucans biosynthesis glucosyltransferase H</fullName>
        <ecNumber evidence="1">2.4.1.-</ecNumber>
    </recommendedName>
</protein>
<name>OPGH_SHEB8</name>
<gene>
    <name evidence="1" type="primary">opgH</name>
    <name type="ordered locus">Shew185_1923</name>
</gene>
<accession>A6WMM7</accession>
<keyword id="KW-0997">Cell inner membrane</keyword>
<keyword id="KW-1003">Cell membrane</keyword>
<keyword id="KW-0328">Glycosyltransferase</keyword>
<keyword id="KW-0472">Membrane</keyword>
<keyword id="KW-0808">Transferase</keyword>
<keyword id="KW-0812">Transmembrane</keyword>
<keyword id="KW-1133">Transmembrane helix</keyword>
<comment type="function">
    <text evidence="1">Involved in the biosynthesis of osmoregulated periplasmic glucans (OPGs).</text>
</comment>
<comment type="pathway">
    <text evidence="1">Glycan metabolism; osmoregulated periplasmic glucan (OPG) biosynthesis.</text>
</comment>
<comment type="subcellular location">
    <subcellularLocation>
        <location evidence="1">Cell inner membrane</location>
        <topology evidence="1">Multi-pass membrane protein</topology>
    </subcellularLocation>
</comment>
<comment type="similarity">
    <text evidence="1">Belongs to the glycosyltransferase 2 family. OpgH subfamily.</text>
</comment>
<sequence length="727" mass="81031">MTVSENSVLETEVLVGGSAMPNERPGAMEPQNLSKMPEGFPRRSTVANGVRSRASRRFLVVGGALLLSLFAIYEMGAVFSIGGITPLEYLVLALFAVNFCWIALAFCSGIAGFLILLRKPRAKDLQVTELHTRTAILMPTYNESPDRVFSAVSVMAETLSQTGHGHAFDWFILSDTTDPDIALLEEQAFLVLRQETHKHSRVYYRRRRKNVARKAGNVADFCRRWGSRYDHLLVLDADSLMESSTITGLAQRMQADPDAGLIQTIPSLINGTTLMARLQQFAARIYGPVIGTGLGWWVQKEGNFWGHNAIIRTEAFMTAAGLPNLKGKPPFGGHIMSHDFVEAALIRRAGWSVVIAYDLPGSYEECPPSIIDLAVRDRRWCQGNLQHSRILPTKGLHWVSRLHLLTGIMAYLSSPFWLMLILTGLMLALQAHFIRPEYFTDQFSLFPTWPIMDSDRALRLFYITMGVLFGPKVFGVLLLLKDGEFARSVGGRIKAIFSVIFEVILSALIAPIMMFIHCGAVMSILMGRDSGWSPQRRDDGSMPWMTLIYRHRWHMLAGVMLGYAAILDSLTLLAWMSPALIGLWIAVPISAWTGSVKIGEVFKRAGILATPEERNPAQICLQAHEARAAYQKHIAEPWTLAQVLKDPALMELHLAMVDKQPLRAAGTPIEAMEAIVHVKVHEARCQQSALAVLNRQEMAMVLANPLMLRSLQKLPEQFVEEDLVSFC</sequence>
<feature type="chain" id="PRO_1000084501" description="Glucans biosynthesis glucosyltransferase H">
    <location>
        <begin position="1"/>
        <end position="727"/>
    </location>
</feature>
<feature type="transmembrane region" description="Helical" evidence="1">
    <location>
        <begin position="58"/>
        <end position="78"/>
    </location>
</feature>
<feature type="transmembrane region" description="Helical" evidence="1">
    <location>
        <begin position="97"/>
        <end position="117"/>
    </location>
</feature>
<feature type="transmembrane region" description="Helical" evidence="1">
    <location>
        <begin position="278"/>
        <end position="298"/>
    </location>
</feature>
<feature type="transmembrane region" description="Helical" evidence="1">
    <location>
        <begin position="408"/>
        <end position="428"/>
    </location>
</feature>
<feature type="transmembrane region" description="Helical" evidence="1">
    <location>
        <begin position="460"/>
        <end position="480"/>
    </location>
</feature>
<feature type="transmembrane region" description="Helical" evidence="1">
    <location>
        <begin position="496"/>
        <end position="516"/>
    </location>
</feature>
<feature type="transmembrane region" description="Helical" evidence="1">
    <location>
        <begin position="572"/>
        <end position="592"/>
    </location>
</feature>
<feature type="region of interest" description="Disordered" evidence="2">
    <location>
        <begin position="18"/>
        <end position="38"/>
    </location>
</feature>
<dbReference type="EC" id="2.4.1.-" evidence="1"/>
<dbReference type="EMBL" id="CP000753">
    <property type="protein sequence ID" value="ABS08066.1"/>
    <property type="molecule type" value="Genomic_DNA"/>
</dbReference>
<dbReference type="CAZy" id="GT2">
    <property type="family name" value="Glycosyltransferase Family 2"/>
</dbReference>
<dbReference type="KEGG" id="sbm:Shew185_1923"/>
<dbReference type="HOGENOM" id="CLU_015730_1_0_6"/>
<dbReference type="UniPathway" id="UPA00637"/>
<dbReference type="GO" id="GO:0005886">
    <property type="term" value="C:plasma membrane"/>
    <property type="evidence" value="ECO:0007669"/>
    <property type="project" value="UniProtKB-SubCell"/>
</dbReference>
<dbReference type="GO" id="GO:0016758">
    <property type="term" value="F:hexosyltransferase activity"/>
    <property type="evidence" value="ECO:0007669"/>
    <property type="project" value="UniProtKB-UniRule"/>
</dbReference>
<dbReference type="GO" id="GO:0009250">
    <property type="term" value="P:glucan biosynthetic process"/>
    <property type="evidence" value="ECO:0007669"/>
    <property type="project" value="UniProtKB-UniRule"/>
</dbReference>
<dbReference type="CDD" id="cd04191">
    <property type="entry name" value="Glucan_BSP_MdoH"/>
    <property type="match status" value="1"/>
</dbReference>
<dbReference type="FunFam" id="3.90.550.10:FF:000047">
    <property type="entry name" value="Glucans biosynthesis glucosyltransferase H"/>
    <property type="match status" value="1"/>
</dbReference>
<dbReference type="Gene3D" id="3.90.550.10">
    <property type="entry name" value="Spore Coat Polysaccharide Biosynthesis Protein SpsA, Chain A"/>
    <property type="match status" value="1"/>
</dbReference>
<dbReference type="HAMAP" id="MF_01072">
    <property type="entry name" value="MdoH_OpgH"/>
    <property type="match status" value="1"/>
</dbReference>
<dbReference type="InterPro" id="IPR023725">
    <property type="entry name" value="Glucans_biosynth_gluTrFase_H"/>
</dbReference>
<dbReference type="InterPro" id="IPR001173">
    <property type="entry name" value="Glyco_trans_2-like"/>
</dbReference>
<dbReference type="InterPro" id="IPR050321">
    <property type="entry name" value="Glycosyltr_2/OpgH_subfam"/>
</dbReference>
<dbReference type="InterPro" id="IPR029044">
    <property type="entry name" value="Nucleotide-diphossugar_trans"/>
</dbReference>
<dbReference type="NCBIfam" id="NF003956">
    <property type="entry name" value="PRK05454.1-3"/>
    <property type="match status" value="1"/>
</dbReference>
<dbReference type="NCBIfam" id="NF003958">
    <property type="entry name" value="PRK05454.2-1"/>
    <property type="match status" value="1"/>
</dbReference>
<dbReference type="NCBIfam" id="NF003962">
    <property type="entry name" value="PRK05454.2-5"/>
    <property type="match status" value="1"/>
</dbReference>
<dbReference type="PANTHER" id="PTHR43867">
    <property type="entry name" value="CELLULOSE SYNTHASE CATALYTIC SUBUNIT A [UDP-FORMING]"/>
    <property type="match status" value="1"/>
</dbReference>
<dbReference type="PANTHER" id="PTHR43867:SF5">
    <property type="entry name" value="GLUCANS BIOSYNTHESIS GLUCOSYLTRANSFERASE H"/>
    <property type="match status" value="1"/>
</dbReference>
<dbReference type="Pfam" id="PF13632">
    <property type="entry name" value="Glyco_trans_2_3"/>
    <property type="match status" value="1"/>
</dbReference>
<dbReference type="SUPFAM" id="SSF53448">
    <property type="entry name" value="Nucleotide-diphospho-sugar transferases"/>
    <property type="match status" value="1"/>
</dbReference>
<proteinExistence type="inferred from homology"/>